<name>FLIW_CLOBL</name>
<organism>
    <name type="scientific">Clostridium botulinum (strain Langeland / NCTC 10281 / Type F)</name>
    <dbReference type="NCBI Taxonomy" id="441772"/>
    <lineage>
        <taxon>Bacteria</taxon>
        <taxon>Bacillati</taxon>
        <taxon>Bacillota</taxon>
        <taxon>Clostridia</taxon>
        <taxon>Eubacteriales</taxon>
        <taxon>Clostridiaceae</taxon>
        <taxon>Clostridium</taxon>
    </lineage>
</organism>
<evidence type="ECO:0000255" key="1">
    <source>
        <dbReference type="HAMAP-Rule" id="MF_01185"/>
    </source>
</evidence>
<dbReference type="EMBL" id="CP000728">
    <property type="protein sequence ID" value="ABS39984.1"/>
    <property type="molecule type" value="Genomic_DNA"/>
</dbReference>
<dbReference type="RefSeq" id="WP_012100564.1">
    <property type="nucleotide sequence ID" value="NC_009699.1"/>
</dbReference>
<dbReference type="SMR" id="A7GGV6"/>
<dbReference type="KEGG" id="cbf:CLI_2788"/>
<dbReference type="HOGENOM" id="CLU_112356_0_2_9"/>
<dbReference type="Proteomes" id="UP000002410">
    <property type="component" value="Chromosome"/>
</dbReference>
<dbReference type="GO" id="GO:0005737">
    <property type="term" value="C:cytoplasm"/>
    <property type="evidence" value="ECO:0007669"/>
    <property type="project" value="UniProtKB-SubCell"/>
</dbReference>
<dbReference type="GO" id="GO:0044780">
    <property type="term" value="P:bacterial-type flagellum assembly"/>
    <property type="evidence" value="ECO:0007669"/>
    <property type="project" value="UniProtKB-UniRule"/>
</dbReference>
<dbReference type="GO" id="GO:0006417">
    <property type="term" value="P:regulation of translation"/>
    <property type="evidence" value="ECO:0007669"/>
    <property type="project" value="UniProtKB-KW"/>
</dbReference>
<dbReference type="Gene3D" id="2.30.290.10">
    <property type="entry name" value="BH3618-like"/>
    <property type="match status" value="1"/>
</dbReference>
<dbReference type="HAMAP" id="MF_01185">
    <property type="entry name" value="FliW"/>
    <property type="match status" value="1"/>
</dbReference>
<dbReference type="InterPro" id="IPR003775">
    <property type="entry name" value="Flagellar_assembly_factor_FliW"/>
</dbReference>
<dbReference type="InterPro" id="IPR024046">
    <property type="entry name" value="Flagellar_assmbl_FliW_dom_sf"/>
</dbReference>
<dbReference type="NCBIfam" id="NF009793">
    <property type="entry name" value="PRK13285.1-1"/>
    <property type="match status" value="1"/>
</dbReference>
<dbReference type="PANTHER" id="PTHR39190">
    <property type="entry name" value="FLAGELLAR ASSEMBLY FACTOR FLIW"/>
    <property type="match status" value="1"/>
</dbReference>
<dbReference type="PANTHER" id="PTHR39190:SF1">
    <property type="entry name" value="FLAGELLAR ASSEMBLY FACTOR FLIW"/>
    <property type="match status" value="1"/>
</dbReference>
<dbReference type="Pfam" id="PF02623">
    <property type="entry name" value="FliW"/>
    <property type="match status" value="1"/>
</dbReference>
<dbReference type="SUPFAM" id="SSF141457">
    <property type="entry name" value="BH3618-like"/>
    <property type="match status" value="1"/>
</dbReference>
<comment type="function">
    <text evidence="1">Acts as an anti-CsrA protein, binds CsrA and prevents it from repressing translation of its target genes, one of which is flagellin. Binds to flagellin and participates in the assembly of the flagellum.</text>
</comment>
<comment type="subunit">
    <text evidence="1">Interacts with translational regulator CsrA and flagellin(s).</text>
</comment>
<comment type="subcellular location">
    <subcellularLocation>
        <location evidence="1">Cytoplasm</location>
    </subcellularLocation>
</comment>
<comment type="similarity">
    <text evidence="1">Belongs to the FliW family.</text>
</comment>
<reference key="1">
    <citation type="submission" date="2007-06" db="EMBL/GenBank/DDBJ databases">
        <authorList>
            <person name="Brinkac L.M."/>
            <person name="Daugherty S."/>
            <person name="Dodson R.J."/>
            <person name="Madupu R."/>
            <person name="Brown J.L."/>
            <person name="Bruce D."/>
            <person name="Detter C."/>
            <person name="Munk C."/>
            <person name="Smith L.A."/>
            <person name="Smith T.J."/>
            <person name="White O."/>
            <person name="Brettin T.S."/>
        </authorList>
    </citation>
    <scope>NUCLEOTIDE SEQUENCE [LARGE SCALE GENOMIC DNA]</scope>
    <source>
        <strain>Langeland / NCTC 10281 / Type F</strain>
    </source>
</reference>
<keyword id="KW-1005">Bacterial flagellum biogenesis</keyword>
<keyword id="KW-0143">Chaperone</keyword>
<keyword id="KW-0963">Cytoplasm</keyword>
<keyword id="KW-0810">Translation regulation</keyword>
<sequence>MNLNTKYHGNIEYEEKDVIYFPKGIPGFEELKRFIIFPVEDNEVFLVFHSIENEDIGIIITSPFNIEKDYEIQLEEEQITNLKIQDEKDALVLNTVTLSSDIDKITVNLRAPIIINIKEKIGEQIIINSDRYKVKHPLFKEEA</sequence>
<proteinExistence type="inferred from homology"/>
<accession>A7GGV6</accession>
<protein>
    <recommendedName>
        <fullName evidence="1">Flagellar assembly factor FliW</fullName>
    </recommendedName>
</protein>
<gene>
    <name evidence="1" type="primary">fliW</name>
    <name type="ordered locus">CLI_2788</name>
</gene>
<feature type="chain" id="PRO_1000065815" description="Flagellar assembly factor FliW">
    <location>
        <begin position="1"/>
        <end position="143"/>
    </location>
</feature>